<feature type="chain" id="PRO_0000358456" description="NAD(P)H-quinone oxidoreductase subunit K">
    <location>
        <begin position="1"/>
        <end position="244"/>
    </location>
</feature>
<feature type="binding site" evidence="1">
    <location>
        <position position="60"/>
    </location>
    <ligand>
        <name>[4Fe-4S] cluster</name>
        <dbReference type="ChEBI" id="CHEBI:49883"/>
    </ligand>
</feature>
<feature type="binding site" evidence="1">
    <location>
        <position position="61"/>
    </location>
    <ligand>
        <name>[4Fe-4S] cluster</name>
        <dbReference type="ChEBI" id="CHEBI:49883"/>
    </ligand>
</feature>
<feature type="binding site" evidence="1">
    <location>
        <position position="125"/>
    </location>
    <ligand>
        <name>[4Fe-4S] cluster</name>
        <dbReference type="ChEBI" id="CHEBI:49883"/>
    </ligand>
</feature>
<feature type="binding site" evidence="1">
    <location>
        <position position="156"/>
    </location>
    <ligand>
        <name>[4Fe-4S] cluster</name>
        <dbReference type="ChEBI" id="CHEBI:49883"/>
    </ligand>
</feature>
<sequence>MNNSLSPKAIRELREETCNPLGAPQVTTDLSENIIMTSLDDLHNWARLSSLWPLLYGTACCFIEFAALIGSRFDFDRFGLVPRSSPRQADLLIVAGTVTMKMAPALVRLYEQMPEPKYVIAMGACTITGGMFSADSTTAVRGVDKLIPVDLYLPGCPPRPEAIFDAVIKLRKKVGNESILERNKAEQTHRYLTVKHDMKLVFSENTGEYLNKKSEKAIKSSDLEMIEENIKVKIEENLIDEETK</sequence>
<gene>
    <name evidence="1" type="primary">ndhK</name>
    <name type="ordered locus">P9515_03261</name>
</gene>
<accession>A2BUS4</accession>
<name>NDHK_PROM5</name>
<reference key="1">
    <citation type="journal article" date="2007" name="PLoS Genet.">
        <title>Patterns and implications of gene gain and loss in the evolution of Prochlorococcus.</title>
        <authorList>
            <person name="Kettler G.C."/>
            <person name="Martiny A.C."/>
            <person name="Huang K."/>
            <person name="Zucker J."/>
            <person name="Coleman M.L."/>
            <person name="Rodrigue S."/>
            <person name="Chen F."/>
            <person name="Lapidus A."/>
            <person name="Ferriera S."/>
            <person name="Johnson J."/>
            <person name="Steglich C."/>
            <person name="Church G.M."/>
            <person name="Richardson P."/>
            <person name="Chisholm S.W."/>
        </authorList>
    </citation>
    <scope>NUCLEOTIDE SEQUENCE [LARGE SCALE GENOMIC DNA]</scope>
    <source>
        <strain>MIT 9515</strain>
    </source>
</reference>
<keyword id="KW-0004">4Fe-4S</keyword>
<keyword id="KW-0408">Iron</keyword>
<keyword id="KW-0411">Iron-sulfur</keyword>
<keyword id="KW-0472">Membrane</keyword>
<keyword id="KW-0479">Metal-binding</keyword>
<keyword id="KW-0520">NAD</keyword>
<keyword id="KW-0521">NADP</keyword>
<keyword id="KW-0618">Plastoquinone</keyword>
<keyword id="KW-0874">Quinone</keyword>
<keyword id="KW-0793">Thylakoid</keyword>
<keyword id="KW-1278">Translocase</keyword>
<keyword id="KW-0813">Transport</keyword>
<protein>
    <recommendedName>
        <fullName evidence="1">NAD(P)H-quinone oxidoreductase subunit K</fullName>
        <ecNumber evidence="1">7.1.1.-</ecNumber>
    </recommendedName>
    <alternativeName>
        <fullName evidence="1">NAD(P)H dehydrogenase I subunit K</fullName>
    </alternativeName>
    <alternativeName>
        <fullName evidence="1">NDH-1 subunit K</fullName>
        <shortName evidence="1">NDH-K</shortName>
    </alternativeName>
</protein>
<organism>
    <name type="scientific">Prochlorococcus marinus (strain MIT 9515)</name>
    <dbReference type="NCBI Taxonomy" id="167542"/>
    <lineage>
        <taxon>Bacteria</taxon>
        <taxon>Bacillati</taxon>
        <taxon>Cyanobacteriota</taxon>
        <taxon>Cyanophyceae</taxon>
        <taxon>Synechococcales</taxon>
        <taxon>Prochlorococcaceae</taxon>
        <taxon>Prochlorococcus</taxon>
    </lineage>
</organism>
<dbReference type="EC" id="7.1.1.-" evidence="1"/>
<dbReference type="EMBL" id="CP000552">
    <property type="protein sequence ID" value="ABM71535.1"/>
    <property type="molecule type" value="Genomic_DNA"/>
</dbReference>
<dbReference type="RefSeq" id="WP_011819644.1">
    <property type="nucleotide sequence ID" value="NC_008817.1"/>
</dbReference>
<dbReference type="SMR" id="A2BUS4"/>
<dbReference type="STRING" id="167542.P9515_03261"/>
<dbReference type="GeneID" id="60200415"/>
<dbReference type="KEGG" id="pmc:P9515_03261"/>
<dbReference type="eggNOG" id="COG0377">
    <property type="taxonomic scope" value="Bacteria"/>
</dbReference>
<dbReference type="HOGENOM" id="CLU_055737_2_0_3"/>
<dbReference type="OrthoDB" id="9786737at2"/>
<dbReference type="Proteomes" id="UP000001589">
    <property type="component" value="Chromosome"/>
</dbReference>
<dbReference type="GO" id="GO:0031676">
    <property type="term" value="C:plasma membrane-derived thylakoid membrane"/>
    <property type="evidence" value="ECO:0007669"/>
    <property type="project" value="UniProtKB-SubCell"/>
</dbReference>
<dbReference type="GO" id="GO:0045271">
    <property type="term" value="C:respiratory chain complex I"/>
    <property type="evidence" value="ECO:0007669"/>
    <property type="project" value="TreeGrafter"/>
</dbReference>
<dbReference type="GO" id="GO:0051539">
    <property type="term" value="F:4 iron, 4 sulfur cluster binding"/>
    <property type="evidence" value="ECO:0007669"/>
    <property type="project" value="UniProtKB-KW"/>
</dbReference>
<dbReference type="GO" id="GO:0005506">
    <property type="term" value="F:iron ion binding"/>
    <property type="evidence" value="ECO:0007669"/>
    <property type="project" value="UniProtKB-UniRule"/>
</dbReference>
<dbReference type="GO" id="GO:0008137">
    <property type="term" value="F:NADH dehydrogenase (ubiquinone) activity"/>
    <property type="evidence" value="ECO:0007669"/>
    <property type="project" value="InterPro"/>
</dbReference>
<dbReference type="GO" id="GO:0048038">
    <property type="term" value="F:quinone binding"/>
    <property type="evidence" value="ECO:0007669"/>
    <property type="project" value="UniProtKB-KW"/>
</dbReference>
<dbReference type="GO" id="GO:0009060">
    <property type="term" value="P:aerobic respiration"/>
    <property type="evidence" value="ECO:0007669"/>
    <property type="project" value="TreeGrafter"/>
</dbReference>
<dbReference type="GO" id="GO:0015990">
    <property type="term" value="P:electron transport coupled proton transport"/>
    <property type="evidence" value="ECO:0007669"/>
    <property type="project" value="TreeGrafter"/>
</dbReference>
<dbReference type="GO" id="GO:0019684">
    <property type="term" value="P:photosynthesis, light reaction"/>
    <property type="evidence" value="ECO:0007669"/>
    <property type="project" value="UniProtKB-UniRule"/>
</dbReference>
<dbReference type="FunFam" id="3.40.50.12280:FF:000003">
    <property type="entry name" value="NAD(P)H-quinone oxidoreductase subunit K, chloroplastic"/>
    <property type="match status" value="1"/>
</dbReference>
<dbReference type="Gene3D" id="3.40.50.12280">
    <property type="match status" value="1"/>
</dbReference>
<dbReference type="HAMAP" id="MF_01356">
    <property type="entry name" value="NDH1_NuoB"/>
    <property type="match status" value="1"/>
</dbReference>
<dbReference type="InterPro" id="IPR006137">
    <property type="entry name" value="NADH_UbQ_OxRdtase-like_20kDa"/>
</dbReference>
<dbReference type="InterPro" id="IPR006138">
    <property type="entry name" value="NADH_UQ_OxRdtase_20Kd_su"/>
</dbReference>
<dbReference type="NCBIfam" id="TIGR01957">
    <property type="entry name" value="nuoB_fam"/>
    <property type="match status" value="1"/>
</dbReference>
<dbReference type="NCBIfam" id="NF005012">
    <property type="entry name" value="PRK06411.1"/>
    <property type="match status" value="1"/>
</dbReference>
<dbReference type="PANTHER" id="PTHR11995">
    <property type="entry name" value="NADH DEHYDROGENASE"/>
    <property type="match status" value="1"/>
</dbReference>
<dbReference type="PANTHER" id="PTHR11995:SF14">
    <property type="entry name" value="NADH DEHYDROGENASE [UBIQUINONE] IRON-SULFUR PROTEIN 7, MITOCHONDRIAL"/>
    <property type="match status" value="1"/>
</dbReference>
<dbReference type="Pfam" id="PF01058">
    <property type="entry name" value="Oxidored_q6"/>
    <property type="match status" value="1"/>
</dbReference>
<dbReference type="SUPFAM" id="SSF56770">
    <property type="entry name" value="HydA/Nqo6-like"/>
    <property type="match status" value="1"/>
</dbReference>
<dbReference type="PROSITE" id="PS01150">
    <property type="entry name" value="COMPLEX1_20K"/>
    <property type="match status" value="1"/>
</dbReference>
<proteinExistence type="inferred from homology"/>
<evidence type="ECO:0000255" key="1">
    <source>
        <dbReference type="HAMAP-Rule" id="MF_01356"/>
    </source>
</evidence>
<comment type="function">
    <text evidence="1">NDH-1 shuttles electrons from an unknown electron donor, via FMN and iron-sulfur (Fe-S) centers, to quinones in the respiratory and/or the photosynthetic chain. The immediate electron acceptor for the enzyme in this species is believed to be plastoquinone. Couples the redox reaction to proton translocation, and thus conserves the redox energy in a proton gradient. Cyanobacterial NDH-1 also plays a role in inorganic carbon-concentration.</text>
</comment>
<comment type="catalytic activity">
    <reaction evidence="1">
        <text>a plastoquinone + NADH + (n+1) H(+)(in) = a plastoquinol + NAD(+) + n H(+)(out)</text>
        <dbReference type="Rhea" id="RHEA:42608"/>
        <dbReference type="Rhea" id="RHEA-COMP:9561"/>
        <dbReference type="Rhea" id="RHEA-COMP:9562"/>
        <dbReference type="ChEBI" id="CHEBI:15378"/>
        <dbReference type="ChEBI" id="CHEBI:17757"/>
        <dbReference type="ChEBI" id="CHEBI:57540"/>
        <dbReference type="ChEBI" id="CHEBI:57945"/>
        <dbReference type="ChEBI" id="CHEBI:62192"/>
    </reaction>
</comment>
<comment type="catalytic activity">
    <reaction evidence="1">
        <text>a plastoquinone + NADPH + (n+1) H(+)(in) = a plastoquinol + NADP(+) + n H(+)(out)</text>
        <dbReference type="Rhea" id="RHEA:42612"/>
        <dbReference type="Rhea" id="RHEA-COMP:9561"/>
        <dbReference type="Rhea" id="RHEA-COMP:9562"/>
        <dbReference type="ChEBI" id="CHEBI:15378"/>
        <dbReference type="ChEBI" id="CHEBI:17757"/>
        <dbReference type="ChEBI" id="CHEBI:57783"/>
        <dbReference type="ChEBI" id="CHEBI:58349"/>
        <dbReference type="ChEBI" id="CHEBI:62192"/>
    </reaction>
</comment>
<comment type="cofactor">
    <cofactor evidence="1">
        <name>[4Fe-4S] cluster</name>
        <dbReference type="ChEBI" id="CHEBI:49883"/>
    </cofactor>
    <text evidence="1">Binds 1 [4Fe-4S] cluster.</text>
</comment>
<comment type="subunit">
    <text evidence="1">NDH-1 can be composed of about 15 different subunits; different subcomplexes with different compositions have been identified which probably have different functions.</text>
</comment>
<comment type="subcellular location">
    <subcellularLocation>
        <location evidence="1">Cellular thylakoid membrane</location>
        <topology evidence="1">Peripheral membrane protein</topology>
        <orientation evidence="1">Cytoplasmic side</orientation>
    </subcellularLocation>
</comment>
<comment type="similarity">
    <text evidence="1">Belongs to the complex I 20 kDa subunit family.</text>
</comment>